<organism>
    <name type="scientific">Brucella abortus (strain 2308)</name>
    <dbReference type="NCBI Taxonomy" id="359391"/>
    <lineage>
        <taxon>Bacteria</taxon>
        <taxon>Pseudomonadati</taxon>
        <taxon>Pseudomonadota</taxon>
        <taxon>Alphaproteobacteria</taxon>
        <taxon>Hyphomicrobiales</taxon>
        <taxon>Brucellaceae</taxon>
        <taxon>Brucella/Ochrobactrum group</taxon>
        <taxon>Brucella</taxon>
    </lineage>
</organism>
<evidence type="ECO:0000255" key="1">
    <source>
        <dbReference type="HAMAP-Rule" id="MF_00038"/>
    </source>
</evidence>
<feature type="chain" id="PRO_0000235440" description="Phospho-N-acetylmuramoyl-pentapeptide-transferase">
    <location>
        <begin position="1"/>
        <end position="360"/>
    </location>
</feature>
<feature type="transmembrane region" description="Helical" evidence="1">
    <location>
        <begin position="27"/>
        <end position="47"/>
    </location>
</feature>
<feature type="transmembrane region" description="Helical" evidence="1">
    <location>
        <begin position="71"/>
        <end position="91"/>
    </location>
</feature>
<feature type="transmembrane region" description="Helical" evidence="1">
    <location>
        <begin position="93"/>
        <end position="113"/>
    </location>
</feature>
<feature type="transmembrane region" description="Helical" evidence="1">
    <location>
        <begin position="128"/>
        <end position="148"/>
    </location>
</feature>
<feature type="transmembrane region" description="Helical" evidence="1">
    <location>
        <begin position="168"/>
        <end position="188"/>
    </location>
</feature>
<feature type="transmembrane region" description="Helical" evidence="1">
    <location>
        <begin position="199"/>
        <end position="219"/>
    </location>
</feature>
<feature type="transmembrane region" description="Helical" evidence="1">
    <location>
        <begin position="239"/>
        <end position="259"/>
    </location>
</feature>
<feature type="transmembrane region" description="Helical" evidence="1">
    <location>
        <begin position="262"/>
        <end position="282"/>
    </location>
</feature>
<feature type="transmembrane region" description="Helical" evidence="1">
    <location>
        <begin position="288"/>
        <end position="308"/>
    </location>
</feature>
<feature type="transmembrane region" description="Helical" evidence="1">
    <location>
        <begin position="337"/>
        <end position="357"/>
    </location>
</feature>
<name>MRAY_BRUA2</name>
<proteinExistence type="inferred from homology"/>
<sequence length="360" mass="38745">MLMFLTHFAEHVTPFNVFRYITFRTGGAMITSALIVFLFGPTIINSLRVRQGKGQPIRADGPQTHFKKAGTPTMGGLMIMTGILASCLLWANLASVYVWVVLMVSVGFGAIGFYDDYLKVTKQSDKGFSGKARLGIEFLIAAIAAFTIMRAGQEPFSSSLTFPFVKQLVINLSWFFIPFAAFVMVGAGNAVNLTDGLDGLAIVPVMVAAASFGFIAYLSGNAIFADYLQIHFVPGTGELAVVLGAVIGAGLGFLWFNAPPAAIFMGDTGSLALGGMLGTVAVATKHEIVLAIIGGLFVMEALSVIIQVGFFKMTGRRVFLMAPIHHHFEKKGWTESQVVIRFWIVAIILAMIGLSTLKLR</sequence>
<reference key="1">
    <citation type="journal article" date="2005" name="Infect. Immun.">
        <title>Whole-genome analyses of speciation events in pathogenic Brucellae.</title>
        <authorList>
            <person name="Chain P.S."/>
            <person name="Comerci D.J."/>
            <person name="Tolmasky M.E."/>
            <person name="Larimer F.W."/>
            <person name="Malfatti S.A."/>
            <person name="Vergez L.M."/>
            <person name="Aguero F."/>
            <person name="Land M.L."/>
            <person name="Ugalde R.A."/>
            <person name="Garcia E."/>
        </authorList>
    </citation>
    <scope>NUCLEOTIDE SEQUENCE [LARGE SCALE GENOMIC DNA]</scope>
    <source>
        <strain>2308</strain>
    </source>
</reference>
<dbReference type="EC" id="2.7.8.13" evidence="1"/>
<dbReference type="EMBL" id="AM040264">
    <property type="protein sequence ID" value="CAJ11409.1"/>
    <property type="molecule type" value="Genomic_DNA"/>
</dbReference>
<dbReference type="RefSeq" id="WP_002964542.1">
    <property type="nucleotide sequence ID" value="NZ_KN046823.1"/>
</dbReference>
<dbReference type="SMR" id="Q2YM68"/>
<dbReference type="STRING" id="359391.BAB1_1453"/>
<dbReference type="GeneID" id="93016268"/>
<dbReference type="KEGG" id="bmf:BAB1_1453"/>
<dbReference type="PATRIC" id="fig|359391.11.peg.904"/>
<dbReference type="HOGENOM" id="CLU_023982_0_0_5"/>
<dbReference type="PhylomeDB" id="Q2YM68"/>
<dbReference type="UniPathway" id="UPA00219"/>
<dbReference type="Proteomes" id="UP000002719">
    <property type="component" value="Chromosome I"/>
</dbReference>
<dbReference type="GO" id="GO:0005886">
    <property type="term" value="C:plasma membrane"/>
    <property type="evidence" value="ECO:0007669"/>
    <property type="project" value="UniProtKB-SubCell"/>
</dbReference>
<dbReference type="GO" id="GO:0046872">
    <property type="term" value="F:metal ion binding"/>
    <property type="evidence" value="ECO:0007669"/>
    <property type="project" value="UniProtKB-KW"/>
</dbReference>
<dbReference type="GO" id="GO:0008963">
    <property type="term" value="F:phospho-N-acetylmuramoyl-pentapeptide-transferase activity"/>
    <property type="evidence" value="ECO:0007669"/>
    <property type="project" value="UniProtKB-UniRule"/>
</dbReference>
<dbReference type="GO" id="GO:0051992">
    <property type="term" value="F:UDP-N-acetylmuramoyl-L-alanyl-D-glutamyl-meso-2,6-diaminopimelyl-D-alanyl-D-alanine:undecaprenyl-phosphate transferase activity"/>
    <property type="evidence" value="ECO:0007669"/>
    <property type="project" value="RHEA"/>
</dbReference>
<dbReference type="GO" id="GO:0051301">
    <property type="term" value="P:cell division"/>
    <property type="evidence" value="ECO:0007669"/>
    <property type="project" value="UniProtKB-KW"/>
</dbReference>
<dbReference type="GO" id="GO:0071555">
    <property type="term" value="P:cell wall organization"/>
    <property type="evidence" value="ECO:0007669"/>
    <property type="project" value="UniProtKB-KW"/>
</dbReference>
<dbReference type="GO" id="GO:0009252">
    <property type="term" value="P:peptidoglycan biosynthetic process"/>
    <property type="evidence" value="ECO:0007669"/>
    <property type="project" value="UniProtKB-UniRule"/>
</dbReference>
<dbReference type="GO" id="GO:0008360">
    <property type="term" value="P:regulation of cell shape"/>
    <property type="evidence" value="ECO:0007669"/>
    <property type="project" value="UniProtKB-KW"/>
</dbReference>
<dbReference type="CDD" id="cd06852">
    <property type="entry name" value="GT_MraY"/>
    <property type="match status" value="1"/>
</dbReference>
<dbReference type="HAMAP" id="MF_00038">
    <property type="entry name" value="MraY"/>
    <property type="match status" value="1"/>
</dbReference>
<dbReference type="InterPro" id="IPR000715">
    <property type="entry name" value="Glycosyl_transferase_4"/>
</dbReference>
<dbReference type="InterPro" id="IPR003524">
    <property type="entry name" value="PNAcMuramoyl-5peptid_Trfase"/>
</dbReference>
<dbReference type="InterPro" id="IPR018480">
    <property type="entry name" value="PNAcMuramoyl-5peptid_Trfase_CS"/>
</dbReference>
<dbReference type="NCBIfam" id="TIGR00445">
    <property type="entry name" value="mraY"/>
    <property type="match status" value="1"/>
</dbReference>
<dbReference type="PANTHER" id="PTHR22926">
    <property type="entry name" value="PHOSPHO-N-ACETYLMURAMOYL-PENTAPEPTIDE-TRANSFERASE"/>
    <property type="match status" value="1"/>
</dbReference>
<dbReference type="PANTHER" id="PTHR22926:SF5">
    <property type="entry name" value="PHOSPHO-N-ACETYLMURAMOYL-PENTAPEPTIDE-TRANSFERASE HOMOLOG"/>
    <property type="match status" value="1"/>
</dbReference>
<dbReference type="Pfam" id="PF00953">
    <property type="entry name" value="Glycos_transf_4"/>
    <property type="match status" value="1"/>
</dbReference>
<dbReference type="Pfam" id="PF10555">
    <property type="entry name" value="MraY_sig1"/>
    <property type="match status" value="1"/>
</dbReference>
<dbReference type="PROSITE" id="PS01347">
    <property type="entry name" value="MRAY_1"/>
    <property type="match status" value="1"/>
</dbReference>
<dbReference type="PROSITE" id="PS01348">
    <property type="entry name" value="MRAY_2"/>
    <property type="match status" value="1"/>
</dbReference>
<gene>
    <name evidence="1" type="primary">mraY</name>
    <name type="ordered locus">BAB1_1453</name>
</gene>
<protein>
    <recommendedName>
        <fullName evidence="1">Phospho-N-acetylmuramoyl-pentapeptide-transferase</fullName>
        <ecNumber evidence="1">2.7.8.13</ecNumber>
    </recommendedName>
    <alternativeName>
        <fullName evidence="1">UDP-MurNAc-pentapeptide phosphotransferase</fullName>
    </alternativeName>
</protein>
<comment type="function">
    <text evidence="1">Catalyzes the initial step of the lipid cycle reactions in the biosynthesis of the cell wall peptidoglycan: transfers peptidoglycan precursor phospho-MurNAc-pentapeptide from UDP-MurNAc-pentapeptide onto the lipid carrier undecaprenyl phosphate, yielding undecaprenyl-pyrophosphoryl-MurNAc-pentapeptide, known as lipid I.</text>
</comment>
<comment type="catalytic activity">
    <reaction evidence="1">
        <text>UDP-N-acetyl-alpha-D-muramoyl-L-alanyl-gamma-D-glutamyl-meso-2,6-diaminopimeloyl-D-alanyl-D-alanine + di-trans,octa-cis-undecaprenyl phosphate = di-trans,octa-cis-undecaprenyl diphospho-N-acetyl-alpha-D-muramoyl-L-alanyl-D-glutamyl-meso-2,6-diaminopimeloyl-D-alanyl-D-alanine + UMP</text>
        <dbReference type="Rhea" id="RHEA:28386"/>
        <dbReference type="ChEBI" id="CHEBI:57865"/>
        <dbReference type="ChEBI" id="CHEBI:60392"/>
        <dbReference type="ChEBI" id="CHEBI:61386"/>
        <dbReference type="ChEBI" id="CHEBI:61387"/>
        <dbReference type="EC" id="2.7.8.13"/>
    </reaction>
</comment>
<comment type="cofactor">
    <cofactor evidence="1">
        <name>Mg(2+)</name>
        <dbReference type="ChEBI" id="CHEBI:18420"/>
    </cofactor>
</comment>
<comment type="pathway">
    <text evidence="1">Cell wall biogenesis; peptidoglycan biosynthesis.</text>
</comment>
<comment type="subcellular location">
    <subcellularLocation>
        <location evidence="1">Cell inner membrane</location>
        <topology evidence="1">Multi-pass membrane protein</topology>
    </subcellularLocation>
</comment>
<comment type="similarity">
    <text evidence="1">Belongs to the glycosyltransferase 4 family. MraY subfamily.</text>
</comment>
<accession>Q2YM68</accession>
<keyword id="KW-0131">Cell cycle</keyword>
<keyword id="KW-0132">Cell division</keyword>
<keyword id="KW-0997">Cell inner membrane</keyword>
<keyword id="KW-1003">Cell membrane</keyword>
<keyword id="KW-0133">Cell shape</keyword>
<keyword id="KW-0961">Cell wall biogenesis/degradation</keyword>
<keyword id="KW-0460">Magnesium</keyword>
<keyword id="KW-0472">Membrane</keyword>
<keyword id="KW-0479">Metal-binding</keyword>
<keyword id="KW-0573">Peptidoglycan synthesis</keyword>
<keyword id="KW-1185">Reference proteome</keyword>
<keyword id="KW-0808">Transferase</keyword>
<keyword id="KW-0812">Transmembrane</keyword>
<keyword id="KW-1133">Transmembrane helix</keyword>